<protein>
    <recommendedName>
        <fullName>V-type proton ATPase catalytic subunit A</fullName>
        <shortName>V-ATPase subunit A</shortName>
        <ecNumber evidence="1">7.1.2.2</ecNumber>
    </recommendedName>
</protein>
<proteinExistence type="evidence at protein level"/>
<evidence type="ECO:0000250" key="1">
    <source>
        <dbReference type="UniProtKB" id="P17255"/>
    </source>
</evidence>
<evidence type="ECO:0000255" key="2">
    <source>
        <dbReference type="PROSITE-ProRule" id="PRU00499"/>
    </source>
</evidence>
<evidence type="ECO:0000255" key="3">
    <source>
        <dbReference type="PROSITE-ProRule" id="PRU10106"/>
    </source>
</evidence>
<evidence type="ECO:0000255" key="4">
    <source>
        <dbReference type="RuleBase" id="RU000339"/>
    </source>
</evidence>
<evidence type="ECO:0000269" key="5">
    <source>
    </source>
</evidence>
<evidence type="ECO:0000269" key="6">
    <source>
    </source>
</evidence>
<evidence type="ECO:0000303" key="7">
    <source>
    </source>
</evidence>
<sequence>MAGALENATKEIKRLSLEDTHESQYGQIYSVSGPVVVAENMIGCAMYELVKVGHDNLVGEVIRINGDKATIQVYEETAGVTVGDPVLRTGKPLSVELGPGLMETIYDGIQRPLKAIKDESQSIYIPRGIDVPALSRTTQYDFTPGKLKVGDHITGGDIFGSIYENSLLDDHKILLPPRARGTITSIAESGSYNVEDTVLEVEFDGKKHKYSMMHTWPVRVPRPVAEKLSADYPLLTGQRVLDSLFPCVQGGTTCIPGAFGCGKTVISQSLSKFSNSDVIIYVGCGERGNEMAEVLMEFPELYTEISGRKEPIMKRTTLVANTSNMPVAAREASIYTGITLAEYFRDQGKNVSMIADSSSRWAEALREISGRLGEMPADQGFPAYLGAKLASFYERAGKATALGSPDRIGSVSIVAAVSPAGGDFSDPVTTATLGITQVFWGLDKKLAQRKHFPSINTSVSYSKYTNVLNKYYDSNYPEFAQLRDKIREILSNAEELEQVVQLVGKSALSDSDKITLDVATLIKEDFLQQNGYSSYDAFCPIWKTFDMMRAFISYYDEAQKAVANGAQWSKLAESTSDVKHSVSSAKFFEPSRGQKEGEKEFSELLSTISERFAEASE</sequence>
<dbReference type="EC" id="7.1.2.2" evidence="1"/>
<dbReference type="EMBL" id="CP017625">
    <property type="protein sequence ID" value="AOW28205.1"/>
    <property type="molecule type" value="Genomic_DNA"/>
</dbReference>
<dbReference type="RefSeq" id="XP_019330831.1">
    <property type="nucleotide sequence ID" value="XM_019475286.1"/>
</dbReference>
<dbReference type="SMR" id="Q5AJB1"/>
<dbReference type="FunCoup" id="Q5AJB1">
    <property type="interactions" value="1165"/>
</dbReference>
<dbReference type="STRING" id="237561.Q5AJB1"/>
<dbReference type="EnsemblFungi" id="C3_01630W_A-T">
    <property type="protein sequence ID" value="C3_01630W_A-T-p1"/>
    <property type="gene ID" value="C3_01630W_A"/>
</dbReference>
<dbReference type="GeneID" id="3636662"/>
<dbReference type="KEGG" id="cal:CAALFM_C301630WA"/>
<dbReference type="CGD" id="CAL0000187512">
    <property type="gene designation" value="TFP1"/>
</dbReference>
<dbReference type="VEuPathDB" id="FungiDB:C3_01630W_A"/>
<dbReference type="eggNOG" id="KOG1352">
    <property type="taxonomic scope" value="Eukaryota"/>
</dbReference>
<dbReference type="HOGENOM" id="CLU_008162_3_1_1"/>
<dbReference type="InParanoid" id="Q5AJB1"/>
<dbReference type="OMA" id="RIVKTFW"/>
<dbReference type="OrthoDB" id="1676488at2759"/>
<dbReference type="PHI-base" id="PHI:3321"/>
<dbReference type="Proteomes" id="UP000000559">
    <property type="component" value="Chromosome 3"/>
</dbReference>
<dbReference type="GO" id="GO:0005829">
    <property type="term" value="C:cytosol"/>
    <property type="evidence" value="ECO:0000314"/>
    <property type="project" value="CGD"/>
</dbReference>
<dbReference type="GO" id="GO:0000329">
    <property type="term" value="C:fungal-type vacuole membrane"/>
    <property type="evidence" value="ECO:0000314"/>
    <property type="project" value="CGD"/>
</dbReference>
<dbReference type="GO" id="GO:0000221">
    <property type="term" value="C:vacuolar proton-transporting V-type ATPase, V1 domain"/>
    <property type="evidence" value="ECO:0000250"/>
    <property type="project" value="UniProtKB"/>
</dbReference>
<dbReference type="GO" id="GO:0005524">
    <property type="term" value="F:ATP binding"/>
    <property type="evidence" value="ECO:0007669"/>
    <property type="project" value="UniProtKB-KW"/>
</dbReference>
<dbReference type="GO" id="GO:0016887">
    <property type="term" value="F:ATP hydrolysis activity"/>
    <property type="evidence" value="ECO:0007669"/>
    <property type="project" value="InterPro"/>
</dbReference>
<dbReference type="GO" id="GO:0046961">
    <property type="term" value="F:proton-transporting ATPase activity, rotational mechanism"/>
    <property type="evidence" value="ECO:0000318"/>
    <property type="project" value="GO_Central"/>
</dbReference>
<dbReference type="GO" id="GO:0046034">
    <property type="term" value="P:ATP metabolic process"/>
    <property type="evidence" value="ECO:0007669"/>
    <property type="project" value="InterPro"/>
</dbReference>
<dbReference type="GO" id="GO:0034599">
    <property type="term" value="P:cellular response to oxidative stress"/>
    <property type="evidence" value="ECO:0000315"/>
    <property type="project" value="CGD"/>
</dbReference>
<dbReference type="GO" id="GO:0006897">
    <property type="term" value="P:endocytosis"/>
    <property type="evidence" value="ECO:0000315"/>
    <property type="project" value="CGD"/>
</dbReference>
<dbReference type="GO" id="GO:0090465">
    <property type="term" value="P:intracellular arginine homeostasis"/>
    <property type="evidence" value="ECO:0007669"/>
    <property type="project" value="EnsemblFungi"/>
</dbReference>
<dbReference type="GO" id="GO:0090464">
    <property type="term" value="P:intracellular histidine homeostasis"/>
    <property type="evidence" value="ECO:0007669"/>
    <property type="project" value="EnsemblFungi"/>
</dbReference>
<dbReference type="GO" id="GO:0090463">
    <property type="term" value="P:intracellular lysine homeostasis"/>
    <property type="evidence" value="ECO:0007669"/>
    <property type="project" value="EnsemblFungi"/>
</dbReference>
<dbReference type="GO" id="GO:1902600">
    <property type="term" value="P:proton transmembrane transport"/>
    <property type="evidence" value="ECO:0000318"/>
    <property type="project" value="GO_Central"/>
</dbReference>
<dbReference type="GO" id="GO:0007035">
    <property type="term" value="P:vacuolar acidification"/>
    <property type="evidence" value="ECO:0000315"/>
    <property type="project" value="CGD"/>
</dbReference>
<dbReference type="CDD" id="cd18111">
    <property type="entry name" value="ATP-synt_V_A-type_alpha_C"/>
    <property type="match status" value="1"/>
</dbReference>
<dbReference type="CDD" id="cd18119">
    <property type="entry name" value="ATP-synt_V_A-type_alpha_N"/>
    <property type="match status" value="1"/>
</dbReference>
<dbReference type="CDD" id="cd01134">
    <property type="entry name" value="V_A-ATPase_A"/>
    <property type="match status" value="1"/>
</dbReference>
<dbReference type="FunFam" id="2.40.30.20:FF:000002">
    <property type="entry name" value="V-type proton ATPase catalytic subunit A"/>
    <property type="match status" value="1"/>
</dbReference>
<dbReference type="FunFam" id="2.40.50.100:FF:000008">
    <property type="entry name" value="V-type proton ATPase catalytic subunit A"/>
    <property type="match status" value="1"/>
</dbReference>
<dbReference type="FunFam" id="3.40.50.300:FF:000052">
    <property type="entry name" value="V-type proton ATPase catalytic subunit A"/>
    <property type="match status" value="1"/>
</dbReference>
<dbReference type="FunFam" id="1.10.1140.10:FF:000003">
    <property type="entry name" value="Vacuolar ATP synthase catalytic subunit A"/>
    <property type="match status" value="1"/>
</dbReference>
<dbReference type="Gene3D" id="2.40.30.20">
    <property type="match status" value="1"/>
</dbReference>
<dbReference type="Gene3D" id="2.40.50.100">
    <property type="match status" value="1"/>
</dbReference>
<dbReference type="Gene3D" id="1.10.1140.10">
    <property type="entry name" value="Bovine Mitochondrial F1-atpase, Atp Synthase Beta Chain, Chain D, domain 3"/>
    <property type="match status" value="1"/>
</dbReference>
<dbReference type="Gene3D" id="3.40.50.300">
    <property type="entry name" value="P-loop containing nucleotide triphosphate hydrolases"/>
    <property type="match status" value="1"/>
</dbReference>
<dbReference type="HAMAP" id="MF_00309">
    <property type="entry name" value="ATP_synth_A_arch"/>
    <property type="match status" value="1"/>
</dbReference>
<dbReference type="InterPro" id="IPR055190">
    <property type="entry name" value="ATP-synt_VA_C"/>
</dbReference>
<dbReference type="InterPro" id="IPR031686">
    <property type="entry name" value="ATP-synth_a_Xtn"/>
</dbReference>
<dbReference type="InterPro" id="IPR023366">
    <property type="entry name" value="ATP_synth_asu-like_sf"/>
</dbReference>
<dbReference type="InterPro" id="IPR020003">
    <property type="entry name" value="ATPase_a/bsu_AS"/>
</dbReference>
<dbReference type="InterPro" id="IPR004100">
    <property type="entry name" value="ATPase_F1/V1/A1_a/bsu_N"/>
</dbReference>
<dbReference type="InterPro" id="IPR036121">
    <property type="entry name" value="ATPase_F1/V1/A1_a/bsu_N_sf"/>
</dbReference>
<dbReference type="InterPro" id="IPR000194">
    <property type="entry name" value="ATPase_F1/V1/A1_a/bsu_nucl-bd"/>
</dbReference>
<dbReference type="InterPro" id="IPR024034">
    <property type="entry name" value="ATPase_F1/V1_b/a_C"/>
</dbReference>
<dbReference type="InterPro" id="IPR005725">
    <property type="entry name" value="ATPase_V1-cplx_asu"/>
</dbReference>
<dbReference type="InterPro" id="IPR027417">
    <property type="entry name" value="P-loop_NTPase"/>
</dbReference>
<dbReference type="InterPro" id="IPR022878">
    <property type="entry name" value="V-ATPase_asu"/>
</dbReference>
<dbReference type="NCBIfam" id="NF003220">
    <property type="entry name" value="PRK04192.1"/>
    <property type="match status" value="1"/>
</dbReference>
<dbReference type="NCBIfam" id="TIGR01042">
    <property type="entry name" value="V-ATPase_V1_A"/>
    <property type="match status" value="1"/>
</dbReference>
<dbReference type="PANTHER" id="PTHR43607:SF1">
    <property type="entry name" value="H(+)-TRANSPORTING TWO-SECTOR ATPASE"/>
    <property type="match status" value="1"/>
</dbReference>
<dbReference type="PANTHER" id="PTHR43607">
    <property type="entry name" value="V-TYPE PROTON ATPASE CATALYTIC SUBUNIT A"/>
    <property type="match status" value="1"/>
</dbReference>
<dbReference type="Pfam" id="PF00006">
    <property type="entry name" value="ATP-synt_ab"/>
    <property type="match status" value="1"/>
</dbReference>
<dbReference type="Pfam" id="PF02874">
    <property type="entry name" value="ATP-synt_ab_N"/>
    <property type="match status" value="1"/>
</dbReference>
<dbReference type="Pfam" id="PF16886">
    <property type="entry name" value="ATP-synt_ab_Xtn"/>
    <property type="match status" value="1"/>
</dbReference>
<dbReference type="Pfam" id="PF22919">
    <property type="entry name" value="ATP-synt_VA_C"/>
    <property type="match status" value="1"/>
</dbReference>
<dbReference type="SUPFAM" id="SSF47917">
    <property type="entry name" value="C-terminal domain of alpha and beta subunits of F1 ATP synthase"/>
    <property type="match status" value="1"/>
</dbReference>
<dbReference type="SUPFAM" id="SSF50615">
    <property type="entry name" value="N-terminal domain of alpha and beta subunits of F1 ATP synthase"/>
    <property type="match status" value="1"/>
</dbReference>
<dbReference type="SUPFAM" id="SSF52540">
    <property type="entry name" value="P-loop containing nucleoside triphosphate hydrolases"/>
    <property type="match status" value="1"/>
</dbReference>
<dbReference type="PROSITE" id="PS00152">
    <property type="entry name" value="ATPASE_ALPHA_BETA"/>
    <property type="match status" value="1"/>
</dbReference>
<organism>
    <name type="scientific">Candida albicans (strain SC5314 / ATCC MYA-2876)</name>
    <name type="common">Yeast</name>
    <dbReference type="NCBI Taxonomy" id="237561"/>
    <lineage>
        <taxon>Eukaryota</taxon>
        <taxon>Fungi</taxon>
        <taxon>Dikarya</taxon>
        <taxon>Ascomycota</taxon>
        <taxon>Saccharomycotina</taxon>
        <taxon>Pichiomycetes</taxon>
        <taxon>Debaryomycetaceae</taxon>
        <taxon>Candida/Lodderomyces clade</taxon>
        <taxon>Candida</taxon>
    </lineage>
</organism>
<comment type="function">
    <text evidence="6">Catalytic subunit of the V1 complex of vacuolar(H+)-ATPase (V-ATPase), a multisubunit enzyme composed of a peripheral complex (V1) that hydrolyzes ATP and a membrane integral complex (V0) that translocates protons (PubMed:25220074). V-ATPase is responsible for acidifying and maintaining the pH of intracellular compartments (PubMed:25220074). Mediates oxidative stress response, filamentous growth, and plays an important role in virulence (PubMed:25220074).</text>
</comment>
<comment type="catalytic activity">
    <reaction evidence="1">
        <text>ATP + H2O + 4 H(+)(in) = ADP + phosphate + 5 H(+)(out)</text>
        <dbReference type="Rhea" id="RHEA:57720"/>
        <dbReference type="ChEBI" id="CHEBI:15377"/>
        <dbReference type="ChEBI" id="CHEBI:15378"/>
        <dbReference type="ChEBI" id="CHEBI:30616"/>
        <dbReference type="ChEBI" id="CHEBI:43474"/>
        <dbReference type="ChEBI" id="CHEBI:456216"/>
        <dbReference type="EC" id="7.1.2.2"/>
    </reaction>
</comment>
<comment type="subunit">
    <text evidence="1">V-ATPase is a heteromultimeric enzyme composed of a peripheral catalytic V1 complex (components A to H) attached to an integral membrane V0 proton pore complex (components: a, c, c', c'', d, e, f and VOA1).</text>
</comment>
<comment type="subcellular location">
    <subcellularLocation>
        <location evidence="1">Vacuole membrane</location>
        <topology evidence="1">Peripheral membrane protein</topology>
        <orientation evidence="1">Cytoplasmic side</orientation>
    </subcellularLocation>
</comment>
<comment type="PTM">
    <text evidence="5">Is a probable target for sumoylation.</text>
</comment>
<comment type="disruption phenotype">
    <text evidence="6">Leads to a defect in vacuolar acidification and higher sensitivity to oxidants such as H(2)O(2) or menadione. Reduces strongly virulence in mice.</text>
</comment>
<comment type="similarity">
    <text evidence="4">Belongs to the ATPase alpha/beta chains family.</text>
</comment>
<accession>Q5AJB1</accession>
<accession>A0A1D8PJ97</accession>
<keyword id="KW-0067">ATP-binding</keyword>
<keyword id="KW-0375">Hydrogen ion transport</keyword>
<keyword id="KW-0406">Ion transport</keyword>
<keyword id="KW-0472">Membrane</keyword>
<keyword id="KW-0547">Nucleotide-binding</keyword>
<keyword id="KW-1185">Reference proteome</keyword>
<keyword id="KW-1278">Translocase</keyword>
<keyword id="KW-0813">Transport</keyword>
<keyword id="KW-0832">Ubl conjugation</keyword>
<keyword id="KW-0926">Vacuole</keyword>
<keyword id="KW-0843">Virulence</keyword>
<feature type="chain" id="PRO_0000431486" description="V-type proton ATPase catalytic subunit A">
    <location>
        <begin position="1"/>
        <end position="617"/>
    </location>
</feature>
<feature type="binding site" evidence="2">
    <location>
        <begin position="257"/>
        <end position="264"/>
    </location>
    <ligand>
        <name>ATP</name>
        <dbReference type="ChEBI" id="CHEBI:30616"/>
    </ligand>
</feature>
<feature type="site" description="Required for activity" evidence="3">
    <location>
        <position position="460"/>
    </location>
</feature>
<gene>
    <name evidence="7" type="primary">TFP1</name>
    <name type="ordered locus">CAALFM_C301630WA</name>
    <name type="ORF">CaO19.9249</name>
</gene>
<name>VATA_CANAL</name>
<reference key="1">
    <citation type="journal article" date="2004" name="Proc. Natl. Acad. Sci. U.S.A.">
        <title>The diploid genome sequence of Candida albicans.</title>
        <authorList>
            <person name="Jones T."/>
            <person name="Federspiel N.A."/>
            <person name="Chibana H."/>
            <person name="Dungan J."/>
            <person name="Kalman S."/>
            <person name="Magee B.B."/>
            <person name="Newport G."/>
            <person name="Thorstenson Y.R."/>
            <person name="Agabian N."/>
            <person name="Magee P.T."/>
            <person name="Davis R.W."/>
            <person name="Scherer S."/>
        </authorList>
    </citation>
    <scope>NUCLEOTIDE SEQUENCE [LARGE SCALE GENOMIC DNA]</scope>
    <source>
        <strain>SC5314 / ATCC MYA-2876</strain>
    </source>
</reference>
<reference key="2">
    <citation type="journal article" date="2007" name="Genome Biol.">
        <title>Assembly of the Candida albicans genome into sixteen supercontigs aligned on the eight chromosomes.</title>
        <authorList>
            <person name="van het Hoog M."/>
            <person name="Rast T.J."/>
            <person name="Martchenko M."/>
            <person name="Grindle S."/>
            <person name="Dignard D."/>
            <person name="Hogues H."/>
            <person name="Cuomo C."/>
            <person name="Berriman M."/>
            <person name="Scherer S."/>
            <person name="Magee B.B."/>
            <person name="Whiteway M."/>
            <person name="Chibana H."/>
            <person name="Nantel A."/>
            <person name="Magee P.T."/>
        </authorList>
    </citation>
    <scope>GENOME REANNOTATION</scope>
    <source>
        <strain>SC5314 / ATCC MYA-2876</strain>
    </source>
</reference>
<reference key="3">
    <citation type="journal article" date="2013" name="Genome Biol.">
        <title>Assembly of a phased diploid Candida albicans genome facilitates allele-specific measurements and provides a simple model for repeat and indel structure.</title>
        <authorList>
            <person name="Muzzey D."/>
            <person name="Schwartz K."/>
            <person name="Weissman J.S."/>
            <person name="Sherlock G."/>
        </authorList>
    </citation>
    <scope>NUCLEOTIDE SEQUENCE [LARGE SCALE GENOMIC DNA]</scope>
    <scope>GENOME REANNOTATION</scope>
    <source>
        <strain>SC5314 / ATCC MYA-2876</strain>
    </source>
</reference>
<reference key="4">
    <citation type="journal article" date="2011" name="Mol. Biol. Cell">
        <title>Identification of sumoylation targets, combined with inactivation of SMT3, reveals the impact of sumoylation upon growth, morphology, and stress resistance in the pathogen Candida albicans.</title>
        <authorList>
            <person name="Leach M.D."/>
            <person name="Stead D.A."/>
            <person name="Argo E."/>
            <person name="Brown A.J."/>
        </authorList>
    </citation>
    <scope>IDENTIFICATION BY MASS SPECTROMETRY</scope>
    <scope>SUMOYLATION</scope>
</reference>
<reference key="5">
    <citation type="journal article" date="2014" name="Fungal Genet. Biol.">
        <title>Role of TFP1 in vacuolar acidification, oxidative stress and filamentous development in Candida albicans.</title>
        <authorList>
            <person name="Jia C."/>
            <person name="Yu Q."/>
            <person name="Xu N."/>
            <person name="Zhang B."/>
            <person name="Dong Y."/>
            <person name="Ding X."/>
            <person name="Chen Y."/>
            <person name="Zhang B."/>
            <person name="Xing L."/>
            <person name="Li M."/>
        </authorList>
    </citation>
    <scope>FUNCTION</scope>
    <scope>SUBCELLULAR LOCATION</scope>
    <scope>DISRUPTION PHENOTYPE</scope>
</reference>